<evidence type="ECO:0000255" key="1">
    <source>
        <dbReference type="HAMAP-Rule" id="MF_00539"/>
    </source>
</evidence>
<evidence type="ECO:0000256" key="2">
    <source>
        <dbReference type="SAM" id="MobiDB-lite"/>
    </source>
</evidence>
<evidence type="ECO:0000305" key="3"/>
<dbReference type="EMBL" id="CP001396">
    <property type="protein sequence ID" value="ACR61863.1"/>
    <property type="molecule type" value="Genomic_DNA"/>
</dbReference>
<dbReference type="RefSeq" id="WP_000940595.1">
    <property type="nucleotide sequence ID" value="NC_012759.1"/>
</dbReference>
<dbReference type="SMR" id="C4ZSS4"/>
<dbReference type="GeneID" id="93778796"/>
<dbReference type="KEGG" id="ebw:BWG_2887"/>
<dbReference type="HOGENOM" id="CLU_095424_4_1_6"/>
<dbReference type="GO" id="GO:0022625">
    <property type="term" value="C:cytosolic large ribosomal subunit"/>
    <property type="evidence" value="ECO:0007669"/>
    <property type="project" value="TreeGrafter"/>
</dbReference>
<dbReference type="GO" id="GO:0003735">
    <property type="term" value="F:structural constituent of ribosome"/>
    <property type="evidence" value="ECO:0007669"/>
    <property type="project" value="InterPro"/>
</dbReference>
<dbReference type="GO" id="GO:0006412">
    <property type="term" value="P:translation"/>
    <property type="evidence" value="ECO:0007669"/>
    <property type="project" value="UniProtKB-UniRule"/>
</dbReference>
<dbReference type="FunFam" id="2.40.50.100:FF:000001">
    <property type="entry name" value="50S ribosomal protein L27"/>
    <property type="match status" value="1"/>
</dbReference>
<dbReference type="Gene3D" id="2.40.50.100">
    <property type="match status" value="1"/>
</dbReference>
<dbReference type="HAMAP" id="MF_00539">
    <property type="entry name" value="Ribosomal_bL27"/>
    <property type="match status" value="1"/>
</dbReference>
<dbReference type="InterPro" id="IPR001684">
    <property type="entry name" value="Ribosomal_bL27"/>
</dbReference>
<dbReference type="InterPro" id="IPR018261">
    <property type="entry name" value="Ribosomal_bL27_CS"/>
</dbReference>
<dbReference type="NCBIfam" id="TIGR00062">
    <property type="entry name" value="L27"/>
    <property type="match status" value="1"/>
</dbReference>
<dbReference type="PANTHER" id="PTHR15893:SF0">
    <property type="entry name" value="LARGE RIBOSOMAL SUBUNIT PROTEIN BL27M"/>
    <property type="match status" value="1"/>
</dbReference>
<dbReference type="PANTHER" id="PTHR15893">
    <property type="entry name" value="RIBOSOMAL PROTEIN L27"/>
    <property type="match status" value="1"/>
</dbReference>
<dbReference type="Pfam" id="PF01016">
    <property type="entry name" value="Ribosomal_L27"/>
    <property type="match status" value="1"/>
</dbReference>
<dbReference type="PRINTS" id="PR00063">
    <property type="entry name" value="RIBOSOMALL27"/>
</dbReference>
<dbReference type="SUPFAM" id="SSF110324">
    <property type="entry name" value="Ribosomal L27 protein-like"/>
    <property type="match status" value="1"/>
</dbReference>
<dbReference type="PROSITE" id="PS00831">
    <property type="entry name" value="RIBOSOMAL_L27"/>
    <property type="match status" value="1"/>
</dbReference>
<organism>
    <name type="scientific">Escherichia coli (strain K12 / MC4100 / BW2952)</name>
    <dbReference type="NCBI Taxonomy" id="595496"/>
    <lineage>
        <taxon>Bacteria</taxon>
        <taxon>Pseudomonadati</taxon>
        <taxon>Pseudomonadota</taxon>
        <taxon>Gammaproteobacteria</taxon>
        <taxon>Enterobacterales</taxon>
        <taxon>Enterobacteriaceae</taxon>
        <taxon>Escherichia</taxon>
    </lineage>
</organism>
<comment type="similarity">
    <text evidence="1">Belongs to the bacterial ribosomal protein bL27 family.</text>
</comment>
<name>RL27_ECOBW</name>
<feature type="chain" id="PRO_1000211925" description="Large ribosomal subunit protein bL27">
    <location>
        <begin position="1"/>
        <end position="85"/>
    </location>
</feature>
<feature type="region of interest" description="Disordered" evidence="2">
    <location>
        <begin position="1"/>
        <end position="20"/>
    </location>
</feature>
<protein>
    <recommendedName>
        <fullName evidence="1">Large ribosomal subunit protein bL27</fullName>
    </recommendedName>
    <alternativeName>
        <fullName evidence="3">50S ribosomal protein L27</fullName>
    </alternativeName>
</protein>
<gene>
    <name evidence="1" type="primary">rpmA</name>
    <name type="ordered locus">BWG_2887</name>
</gene>
<reference key="1">
    <citation type="journal article" date="2009" name="J. Bacteriol.">
        <title>Genomic sequencing reveals regulatory mutations and recombinational events in the widely used MC4100 lineage of Escherichia coli K-12.</title>
        <authorList>
            <person name="Ferenci T."/>
            <person name="Zhou Z."/>
            <person name="Betteridge T."/>
            <person name="Ren Y."/>
            <person name="Liu Y."/>
            <person name="Feng L."/>
            <person name="Reeves P.R."/>
            <person name="Wang L."/>
        </authorList>
    </citation>
    <scope>NUCLEOTIDE SEQUENCE [LARGE SCALE GENOMIC DNA]</scope>
    <source>
        <strain>K12 / MC4100 / BW2952</strain>
    </source>
</reference>
<accession>C4ZSS4</accession>
<sequence length="85" mass="9124">MAHKKAGGSTRNGRDSEAKRLGVKRFGGESVLAGSIIVRQRGTKFHAGANVGCGRDHTLFAKADGKVKFEVKGPKNRKFISIEAE</sequence>
<proteinExistence type="inferred from homology"/>
<keyword id="KW-0687">Ribonucleoprotein</keyword>
<keyword id="KW-0689">Ribosomal protein</keyword>